<proteinExistence type="inferred from homology"/>
<sequence>MEHIYQDAWIIPFIPLPIPIAIGLGLLLFPTTTKRIRRIWAFFSVLLLSIIMIFSVILSIKQIDGNPIYQYVWSWTINNDFSLDFGNFIDPLTSIMLILITTVGIMVLIYSDNYMSHDQGYLRFFAYMSFFNASMLGLVTSSNLIQIYIFWELVGMCSYLLIGFWFTRPLAANACQKAFVTNRVGDFSLFLGILGLYWITGSFEFRDFFEIAKNLIDNNGYNSFFLTLCTSLLFVGAVAKSAQFPLHVWLPDAMEGPTPISALIHAATMVAAGIFLVARLFPLFTVIPYIMNIIALVGIITLLLGATLALAQRDIKRSLAYSTMSQLGYIMLALGMGSYRAALFHLITHAYSKALLFLGSGSIIHSMENVVGYSPDKSQNMALMGGLTKYAPITKTSFLLGTLSLCGIPPLACFWSKDEILNDSWLYSPIFATIACLTAGLTAFYMFRMYLLTFEGHLNINCKNYSAKKNNGLYSISIWGKMGSKVIQNNYFVSTMNNYEKITLKAKQIDDNGISNMMRPFITINKIFDNTKTFTYPYESDNTMLFPLFVLVIFTFFIGYIGILPFDQGRIHFDILSKWLIPSINFLHSDFNNSFDWYEFLINALFSVSIAYFGIFIALFLYGPAYSYFHNFNLINFFIKRGPHRILWDKIINRVYNWSYNRGYIDIFYAKILIAGIRGLADFTYFFDKKVIEGIVNGIGVISFFVAESIKYVGGGRISSYLFFYLFYVAVFLVICLN</sequence>
<organism>
    <name type="scientific">Ranunculus macranthus</name>
    <name type="common">Large buttercup</name>
    <dbReference type="NCBI Taxonomy" id="334596"/>
    <lineage>
        <taxon>Eukaryota</taxon>
        <taxon>Viridiplantae</taxon>
        <taxon>Streptophyta</taxon>
        <taxon>Embryophyta</taxon>
        <taxon>Tracheophyta</taxon>
        <taxon>Spermatophyta</taxon>
        <taxon>Magnoliopsida</taxon>
        <taxon>Ranunculales</taxon>
        <taxon>Ranunculaceae</taxon>
        <taxon>Ranunculoideae</taxon>
        <taxon>Ranunculeae</taxon>
        <taxon>Ranunculus</taxon>
    </lineage>
</organism>
<feature type="chain" id="PRO_0000360971" description="NAD(P)H-quinone oxidoreductase subunit 5, chloroplastic">
    <location>
        <begin position="1"/>
        <end position="738"/>
    </location>
</feature>
<feature type="transmembrane region" description="Helical" evidence="2">
    <location>
        <begin position="9"/>
        <end position="29"/>
    </location>
</feature>
<feature type="transmembrane region" description="Helical" evidence="2">
    <location>
        <begin position="39"/>
        <end position="59"/>
    </location>
</feature>
<feature type="transmembrane region" description="Helical" evidence="2">
    <location>
        <begin position="89"/>
        <end position="109"/>
    </location>
</feature>
<feature type="transmembrane region" description="Helical" evidence="2">
    <location>
        <begin position="125"/>
        <end position="145"/>
    </location>
</feature>
<feature type="transmembrane region" description="Helical" evidence="2">
    <location>
        <begin position="147"/>
        <end position="167"/>
    </location>
</feature>
<feature type="transmembrane region" description="Helical" evidence="2">
    <location>
        <begin position="185"/>
        <end position="205"/>
    </location>
</feature>
<feature type="transmembrane region" description="Helical" evidence="2">
    <location>
        <begin position="224"/>
        <end position="244"/>
    </location>
</feature>
<feature type="transmembrane region" description="Helical" evidence="2">
    <location>
        <begin position="258"/>
        <end position="278"/>
    </location>
</feature>
<feature type="transmembrane region" description="Helical" evidence="2">
    <location>
        <begin position="280"/>
        <end position="300"/>
    </location>
</feature>
<feature type="transmembrane region" description="Helical" evidence="2">
    <location>
        <begin position="327"/>
        <end position="347"/>
    </location>
</feature>
<feature type="transmembrane region" description="Helical" evidence="2">
    <location>
        <begin position="396"/>
        <end position="416"/>
    </location>
</feature>
<feature type="transmembrane region" description="Helical" evidence="2">
    <location>
        <begin position="425"/>
        <end position="445"/>
    </location>
</feature>
<feature type="transmembrane region" description="Helical" evidence="2">
    <location>
        <begin position="544"/>
        <end position="564"/>
    </location>
</feature>
<feature type="transmembrane region" description="Helical" evidence="2">
    <location>
        <begin position="600"/>
        <end position="620"/>
    </location>
</feature>
<feature type="transmembrane region" description="Helical" evidence="2">
    <location>
        <begin position="667"/>
        <end position="687"/>
    </location>
</feature>
<feature type="transmembrane region" description="Helical" evidence="2">
    <location>
        <begin position="694"/>
        <end position="714"/>
    </location>
</feature>
<feature type="transmembrane region" description="Helical" evidence="2">
    <location>
        <begin position="718"/>
        <end position="738"/>
    </location>
</feature>
<reference key="1">
    <citation type="journal article" date="2007" name="BMC Genomics">
        <title>Comparative chloroplast genomics: analyses including new sequences from the angiosperms Nuphar advena and Ranunculus macranthus.</title>
        <authorList>
            <person name="Raubeson L.A."/>
            <person name="Peery R."/>
            <person name="Chumley T.W."/>
            <person name="Dziubek C."/>
            <person name="Fourcade H.M."/>
            <person name="Boore J.L."/>
            <person name="Jansen R.K."/>
        </authorList>
    </citation>
    <scope>NUCLEOTIDE SEQUENCE [LARGE SCALE GENOMIC DNA]</scope>
</reference>
<dbReference type="EC" id="7.1.1.-"/>
<dbReference type="EMBL" id="DQ359689">
    <property type="protein sequence ID" value="ABC70812.1"/>
    <property type="molecule type" value="Genomic_DNA"/>
</dbReference>
<dbReference type="RefSeq" id="YP_001004242.1">
    <property type="nucleotide sequence ID" value="NC_008796.1"/>
</dbReference>
<dbReference type="SMR" id="A1XGU4"/>
<dbReference type="GeneID" id="4712184"/>
<dbReference type="GO" id="GO:0009535">
    <property type="term" value="C:chloroplast thylakoid membrane"/>
    <property type="evidence" value="ECO:0007669"/>
    <property type="project" value="UniProtKB-SubCell"/>
</dbReference>
<dbReference type="GO" id="GO:0008137">
    <property type="term" value="F:NADH dehydrogenase (ubiquinone) activity"/>
    <property type="evidence" value="ECO:0007669"/>
    <property type="project" value="InterPro"/>
</dbReference>
<dbReference type="GO" id="GO:0048038">
    <property type="term" value="F:quinone binding"/>
    <property type="evidence" value="ECO:0007669"/>
    <property type="project" value="UniProtKB-KW"/>
</dbReference>
<dbReference type="GO" id="GO:0042773">
    <property type="term" value="P:ATP synthesis coupled electron transport"/>
    <property type="evidence" value="ECO:0007669"/>
    <property type="project" value="InterPro"/>
</dbReference>
<dbReference type="GO" id="GO:0015990">
    <property type="term" value="P:electron transport coupled proton transport"/>
    <property type="evidence" value="ECO:0007669"/>
    <property type="project" value="TreeGrafter"/>
</dbReference>
<dbReference type="Gene3D" id="1.20.5.2700">
    <property type="match status" value="1"/>
</dbReference>
<dbReference type="InterPro" id="IPR002128">
    <property type="entry name" value="NADH_UbQ_OxRdtase_chlpt_su5_C"/>
</dbReference>
<dbReference type="InterPro" id="IPR018393">
    <property type="entry name" value="NADHpl_OxRdtase_5_subgr"/>
</dbReference>
<dbReference type="InterPro" id="IPR001750">
    <property type="entry name" value="ND/Mrp_TM"/>
</dbReference>
<dbReference type="InterPro" id="IPR003945">
    <property type="entry name" value="NU5C-like"/>
</dbReference>
<dbReference type="InterPro" id="IPR001516">
    <property type="entry name" value="Proton_antipo_N"/>
</dbReference>
<dbReference type="NCBIfam" id="TIGR01974">
    <property type="entry name" value="NDH_I_L"/>
    <property type="match status" value="1"/>
</dbReference>
<dbReference type="NCBIfam" id="NF005141">
    <property type="entry name" value="PRK06590.1"/>
    <property type="match status" value="1"/>
</dbReference>
<dbReference type="PANTHER" id="PTHR42829">
    <property type="entry name" value="NADH-UBIQUINONE OXIDOREDUCTASE CHAIN 5"/>
    <property type="match status" value="1"/>
</dbReference>
<dbReference type="PANTHER" id="PTHR42829:SF2">
    <property type="entry name" value="NADH-UBIQUINONE OXIDOREDUCTASE CHAIN 5"/>
    <property type="match status" value="1"/>
</dbReference>
<dbReference type="Pfam" id="PF01010">
    <property type="entry name" value="Proton_antipo_C"/>
    <property type="match status" value="1"/>
</dbReference>
<dbReference type="Pfam" id="PF00361">
    <property type="entry name" value="Proton_antipo_M"/>
    <property type="match status" value="1"/>
</dbReference>
<dbReference type="Pfam" id="PF00662">
    <property type="entry name" value="Proton_antipo_N"/>
    <property type="match status" value="1"/>
</dbReference>
<dbReference type="PRINTS" id="PR01434">
    <property type="entry name" value="NADHDHGNASE5"/>
</dbReference>
<dbReference type="PRINTS" id="PR01435">
    <property type="entry name" value="NPOXDRDTASE5"/>
</dbReference>
<accession>A1XGU4</accession>
<protein>
    <recommendedName>
        <fullName>NAD(P)H-quinone oxidoreductase subunit 5, chloroplastic</fullName>
        <ecNumber>7.1.1.-</ecNumber>
    </recommendedName>
    <alternativeName>
        <fullName>NAD(P)H dehydrogenase subunit 5</fullName>
    </alternativeName>
    <alternativeName>
        <fullName>NADH-plastoquinone oxidoreductase subunit 5</fullName>
    </alternativeName>
</protein>
<comment type="function">
    <text evidence="1">NDH shuttles electrons from NAD(P)H:plastoquinone, via FMN and iron-sulfur (Fe-S) centers, to quinones in the photosynthetic chain and possibly in a chloroplast respiratory chain. The immediate electron acceptor for the enzyme in this species is believed to be plastoquinone. Couples the redox reaction to proton translocation, and thus conserves the redox energy in a proton gradient (By similarity).</text>
</comment>
<comment type="catalytic activity">
    <reaction>
        <text>a plastoquinone + NADH + (n+1) H(+)(in) = a plastoquinol + NAD(+) + n H(+)(out)</text>
        <dbReference type="Rhea" id="RHEA:42608"/>
        <dbReference type="Rhea" id="RHEA-COMP:9561"/>
        <dbReference type="Rhea" id="RHEA-COMP:9562"/>
        <dbReference type="ChEBI" id="CHEBI:15378"/>
        <dbReference type="ChEBI" id="CHEBI:17757"/>
        <dbReference type="ChEBI" id="CHEBI:57540"/>
        <dbReference type="ChEBI" id="CHEBI:57945"/>
        <dbReference type="ChEBI" id="CHEBI:62192"/>
    </reaction>
</comment>
<comment type="catalytic activity">
    <reaction>
        <text>a plastoquinone + NADPH + (n+1) H(+)(in) = a plastoquinol + NADP(+) + n H(+)(out)</text>
        <dbReference type="Rhea" id="RHEA:42612"/>
        <dbReference type="Rhea" id="RHEA-COMP:9561"/>
        <dbReference type="Rhea" id="RHEA-COMP:9562"/>
        <dbReference type="ChEBI" id="CHEBI:15378"/>
        <dbReference type="ChEBI" id="CHEBI:17757"/>
        <dbReference type="ChEBI" id="CHEBI:57783"/>
        <dbReference type="ChEBI" id="CHEBI:58349"/>
        <dbReference type="ChEBI" id="CHEBI:62192"/>
    </reaction>
</comment>
<comment type="subunit">
    <text evidence="1">NDH is composed of at least 16 different subunits, 5 of which are encoded in the nucleus.</text>
</comment>
<comment type="subcellular location">
    <subcellularLocation>
        <location evidence="1">Plastid</location>
        <location evidence="1">Chloroplast thylakoid membrane</location>
        <topology evidence="1">Multi-pass membrane protein</topology>
    </subcellularLocation>
</comment>
<comment type="similarity">
    <text evidence="3">Belongs to the complex I subunit 5 family.</text>
</comment>
<geneLocation type="chloroplast"/>
<name>NU5C_RANMC</name>
<evidence type="ECO:0000250" key="1"/>
<evidence type="ECO:0000255" key="2"/>
<evidence type="ECO:0000305" key="3"/>
<keyword id="KW-0150">Chloroplast</keyword>
<keyword id="KW-0472">Membrane</keyword>
<keyword id="KW-0520">NAD</keyword>
<keyword id="KW-0521">NADP</keyword>
<keyword id="KW-0934">Plastid</keyword>
<keyword id="KW-0618">Plastoquinone</keyword>
<keyword id="KW-0874">Quinone</keyword>
<keyword id="KW-0793">Thylakoid</keyword>
<keyword id="KW-1278">Translocase</keyword>
<keyword id="KW-0812">Transmembrane</keyword>
<keyword id="KW-1133">Transmembrane helix</keyword>
<keyword id="KW-0813">Transport</keyword>
<gene>
    <name type="primary">ndhF</name>
</gene>